<organism>
    <name type="scientific">Nocardioides sp. (strain ATCC BAA-499 / JS614)</name>
    <dbReference type="NCBI Taxonomy" id="196162"/>
    <lineage>
        <taxon>Bacteria</taxon>
        <taxon>Bacillati</taxon>
        <taxon>Actinomycetota</taxon>
        <taxon>Actinomycetes</taxon>
        <taxon>Propionibacteriales</taxon>
        <taxon>Nocardioidaceae</taxon>
        <taxon>Nocardioides</taxon>
    </lineage>
</organism>
<evidence type="ECO:0000255" key="1">
    <source>
        <dbReference type="HAMAP-Rule" id="MF_00134"/>
    </source>
</evidence>
<gene>
    <name evidence="1" type="primary">trpC</name>
    <name type="ordered locus">Noca_3027</name>
</gene>
<comment type="catalytic activity">
    <reaction evidence="1">
        <text>1-(2-carboxyphenylamino)-1-deoxy-D-ribulose 5-phosphate + H(+) = (1S,2R)-1-C-(indol-3-yl)glycerol 3-phosphate + CO2 + H2O</text>
        <dbReference type="Rhea" id="RHEA:23476"/>
        <dbReference type="ChEBI" id="CHEBI:15377"/>
        <dbReference type="ChEBI" id="CHEBI:15378"/>
        <dbReference type="ChEBI" id="CHEBI:16526"/>
        <dbReference type="ChEBI" id="CHEBI:58613"/>
        <dbReference type="ChEBI" id="CHEBI:58866"/>
        <dbReference type="EC" id="4.1.1.48"/>
    </reaction>
</comment>
<comment type="pathway">
    <text evidence="1">Amino-acid biosynthesis; L-tryptophan biosynthesis; L-tryptophan from chorismate: step 4/5.</text>
</comment>
<comment type="similarity">
    <text evidence="1">Belongs to the TrpC family.</text>
</comment>
<protein>
    <recommendedName>
        <fullName evidence="1">Indole-3-glycerol phosphate synthase</fullName>
        <shortName evidence="1">IGPS</shortName>
        <ecNumber evidence="1">4.1.1.48</ecNumber>
    </recommendedName>
</protein>
<accession>A1SL44</accession>
<name>TRPC_NOCSJ</name>
<sequence length="260" mass="27551">MSVLDDIVAGVRLDLAERESATSLADLRAALADVDPPRDPMPHFRAAGSSVIAEVKRRSPSKGDLATIPDPAELARSYAAGGAAAISVLTEQRRFGGSLADLRAVRAAVDTPILRKDFIVSSYQVVEARAAGADLVLLIVAALDDDDLRRLHDEARELGLTALVEVHDEPETERAVALGAELVGVNARNLKTLAIHDDTFGRLAPLVPDDRVKVAESGIFGPDDVARFVREGARAVLVGEALVKDGDPEGAVRRMTGVES</sequence>
<reference key="1">
    <citation type="submission" date="2006-12" db="EMBL/GenBank/DDBJ databases">
        <title>Complete sequence of chromosome 1 of Nocardioides sp. JS614.</title>
        <authorList>
            <person name="Copeland A."/>
            <person name="Lucas S."/>
            <person name="Lapidus A."/>
            <person name="Barry K."/>
            <person name="Detter J.C."/>
            <person name="Glavina del Rio T."/>
            <person name="Hammon N."/>
            <person name="Israni S."/>
            <person name="Dalin E."/>
            <person name="Tice H."/>
            <person name="Pitluck S."/>
            <person name="Thompson L.S."/>
            <person name="Brettin T."/>
            <person name="Bruce D."/>
            <person name="Han C."/>
            <person name="Tapia R."/>
            <person name="Schmutz J."/>
            <person name="Larimer F."/>
            <person name="Land M."/>
            <person name="Hauser L."/>
            <person name="Kyrpides N."/>
            <person name="Kim E."/>
            <person name="Mattes T."/>
            <person name="Gossett J."/>
            <person name="Richardson P."/>
        </authorList>
    </citation>
    <scope>NUCLEOTIDE SEQUENCE [LARGE SCALE GENOMIC DNA]</scope>
    <source>
        <strain>ATCC BAA-499 / JS614</strain>
    </source>
</reference>
<feature type="chain" id="PRO_1000018513" description="Indole-3-glycerol phosphate synthase">
    <location>
        <begin position="1"/>
        <end position="260"/>
    </location>
</feature>
<keyword id="KW-0028">Amino-acid biosynthesis</keyword>
<keyword id="KW-0057">Aromatic amino acid biosynthesis</keyword>
<keyword id="KW-0210">Decarboxylase</keyword>
<keyword id="KW-0456">Lyase</keyword>
<keyword id="KW-1185">Reference proteome</keyword>
<keyword id="KW-0822">Tryptophan biosynthesis</keyword>
<proteinExistence type="inferred from homology"/>
<dbReference type="EC" id="4.1.1.48" evidence="1"/>
<dbReference type="EMBL" id="CP000509">
    <property type="protein sequence ID" value="ABL82529.1"/>
    <property type="molecule type" value="Genomic_DNA"/>
</dbReference>
<dbReference type="RefSeq" id="WP_011756463.1">
    <property type="nucleotide sequence ID" value="NC_008699.1"/>
</dbReference>
<dbReference type="SMR" id="A1SL44"/>
<dbReference type="STRING" id="196162.Noca_3027"/>
<dbReference type="KEGG" id="nca:Noca_3027"/>
<dbReference type="eggNOG" id="COG0134">
    <property type="taxonomic scope" value="Bacteria"/>
</dbReference>
<dbReference type="HOGENOM" id="CLU_034247_0_1_11"/>
<dbReference type="OrthoDB" id="9804217at2"/>
<dbReference type="UniPathway" id="UPA00035">
    <property type="reaction ID" value="UER00043"/>
</dbReference>
<dbReference type="Proteomes" id="UP000000640">
    <property type="component" value="Chromosome"/>
</dbReference>
<dbReference type="GO" id="GO:0004425">
    <property type="term" value="F:indole-3-glycerol-phosphate synthase activity"/>
    <property type="evidence" value="ECO:0007669"/>
    <property type="project" value="UniProtKB-UniRule"/>
</dbReference>
<dbReference type="GO" id="GO:0004640">
    <property type="term" value="F:phosphoribosylanthranilate isomerase activity"/>
    <property type="evidence" value="ECO:0007669"/>
    <property type="project" value="TreeGrafter"/>
</dbReference>
<dbReference type="GO" id="GO:0000162">
    <property type="term" value="P:L-tryptophan biosynthetic process"/>
    <property type="evidence" value="ECO:0007669"/>
    <property type="project" value="UniProtKB-UniRule"/>
</dbReference>
<dbReference type="CDD" id="cd00331">
    <property type="entry name" value="IGPS"/>
    <property type="match status" value="1"/>
</dbReference>
<dbReference type="FunFam" id="3.20.20.70:FF:000024">
    <property type="entry name" value="Indole-3-glycerol phosphate synthase"/>
    <property type="match status" value="1"/>
</dbReference>
<dbReference type="Gene3D" id="3.20.20.70">
    <property type="entry name" value="Aldolase class I"/>
    <property type="match status" value="1"/>
</dbReference>
<dbReference type="HAMAP" id="MF_00134_A">
    <property type="entry name" value="IGPS_A"/>
    <property type="match status" value="1"/>
</dbReference>
<dbReference type="HAMAP" id="MF_00134_B">
    <property type="entry name" value="IGPS_B"/>
    <property type="match status" value="1"/>
</dbReference>
<dbReference type="InterPro" id="IPR013785">
    <property type="entry name" value="Aldolase_TIM"/>
</dbReference>
<dbReference type="InterPro" id="IPR045186">
    <property type="entry name" value="Indole-3-glycerol_P_synth"/>
</dbReference>
<dbReference type="InterPro" id="IPR013798">
    <property type="entry name" value="Indole-3-glycerol_P_synth_dom"/>
</dbReference>
<dbReference type="InterPro" id="IPR001468">
    <property type="entry name" value="Indole-3-GlycerolPSynthase_CS"/>
</dbReference>
<dbReference type="InterPro" id="IPR011060">
    <property type="entry name" value="RibuloseP-bd_barrel"/>
</dbReference>
<dbReference type="NCBIfam" id="NF001369">
    <property type="entry name" value="PRK00278.1-1"/>
    <property type="match status" value="1"/>
</dbReference>
<dbReference type="NCBIfam" id="NF001377">
    <property type="entry name" value="PRK00278.2-4"/>
    <property type="match status" value="1"/>
</dbReference>
<dbReference type="PANTHER" id="PTHR22854:SF2">
    <property type="entry name" value="INDOLE-3-GLYCEROL-PHOSPHATE SYNTHASE"/>
    <property type="match status" value="1"/>
</dbReference>
<dbReference type="PANTHER" id="PTHR22854">
    <property type="entry name" value="TRYPTOPHAN BIOSYNTHESIS PROTEIN"/>
    <property type="match status" value="1"/>
</dbReference>
<dbReference type="Pfam" id="PF00218">
    <property type="entry name" value="IGPS"/>
    <property type="match status" value="1"/>
</dbReference>
<dbReference type="SUPFAM" id="SSF51366">
    <property type="entry name" value="Ribulose-phoshate binding barrel"/>
    <property type="match status" value="1"/>
</dbReference>
<dbReference type="PROSITE" id="PS00614">
    <property type="entry name" value="IGPS"/>
    <property type="match status" value="1"/>
</dbReference>